<protein>
    <recommendedName>
        <fullName>Transcriptional adapter 3-B</fullName>
    </recommendedName>
    <alternativeName>
        <fullName>ADA3 homolog B</fullName>
    </alternativeName>
    <alternativeName>
        <fullName>Transcriptional adapter 3-like B</fullName>
        <shortName>ADA3-like protein B</shortName>
    </alternativeName>
</protein>
<keyword id="KW-0175">Coiled coil</keyword>
<keyword id="KW-0539">Nucleus</keyword>
<keyword id="KW-1185">Reference proteome</keyword>
<keyword id="KW-0804">Transcription</keyword>
<keyword id="KW-0805">Transcription regulation</keyword>
<gene>
    <name type="primary">tada3-b</name>
    <name type="synonym">ada3-b</name>
    <name type="synonym">tada3l-b</name>
</gene>
<proteinExistence type="evidence at transcript level"/>
<feature type="chain" id="PRO_0000356232" description="Transcriptional adapter 3-B">
    <location>
        <begin position="1"/>
        <end position="432"/>
    </location>
</feature>
<feature type="region of interest" description="Disordered" evidence="3">
    <location>
        <begin position="90"/>
        <end position="124"/>
    </location>
</feature>
<feature type="region of interest" description="Disordered" evidence="3">
    <location>
        <begin position="275"/>
        <end position="315"/>
    </location>
</feature>
<feature type="coiled-coil region" evidence="2">
    <location>
        <begin position="335"/>
        <end position="398"/>
    </location>
</feature>
<feature type="compositionally biased region" description="Polar residues" evidence="3">
    <location>
        <begin position="293"/>
        <end position="305"/>
    </location>
</feature>
<accession>Q66IZ5</accession>
<reference key="1">
    <citation type="submission" date="2004-08" db="EMBL/GenBank/DDBJ databases">
        <authorList>
            <consortium name="NIH - Xenopus Gene Collection (XGC) project"/>
        </authorList>
    </citation>
    <scope>NUCLEOTIDE SEQUENCE [LARGE SCALE MRNA]</scope>
    <source>
        <tissue>Oocyte</tissue>
    </source>
</reference>
<dbReference type="EMBL" id="BC081129">
    <property type="protein sequence ID" value="AAH81129.1"/>
    <property type="molecule type" value="mRNA"/>
</dbReference>
<dbReference type="RefSeq" id="NP_001087715.1">
    <property type="nucleotide sequence ID" value="NM_001094246.1"/>
</dbReference>
<dbReference type="SMR" id="Q66IZ5"/>
<dbReference type="DNASU" id="447539"/>
<dbReference type="GeneID" id="447539"/>
<dbReference type="KEGG" id="xla:447539"/>
<dbReference type="AGR" id="Xenbase:XB-GENE-6253762"/>
<dbReference type="CTD" id="447539"/>
<dbReference type="Xenbase" id="XB-GENE-6253762">
    <property type="gene designation" value="tada3.S"/>
</dbReference>
<dbReference type="OMA" id="TPNKFWA"/>
<dbReference type="OrthoDB" id="1232at2759"/>
<dbReference type="Proteomes" id="UP000186698">
    <property type="component" value="Chromosome 4S"/>
</dbReference>
<dbReference type="Bgee" id="447539">
    <property type="expression patterns" value="Expressed in blastula and 19 other cell types or tissues"/>
</dbReference>
<dbReference type="GO" id="GO:0005634">
    <property type="term" value="C:nucleus"/>
    <property type="evidence" value="ECO:0007669"/>
    <property type="project" value="UniProtKB-SubCell"/>
</dbReference>
<dbReference type="GO" id="GO:0000124">
    <property type="term" value="C:SAGA complex"/>
    <property type="evidence" value="ECO:0000318"/>
    <property type="project" value="GO_Central"/>
</dbReference>
<dbReference type="GO" id="GO:0003713">
    <property type="term" value="F:transcription coactivator activity"/>
    <property type="evidence" value="ECO:0000318"/>
    <property type="project" value="GO_Central"/>
</dbReference>
<dbReference type="GO" id="GO:0006357">
    <property type="term" value="P:regulation of transcription by RNA polymerase II"/>
    <property type="evidence" value="ECO:0000318"/>
    <property type="project" value="GO_Central"/>
</dbReference>
<dbReference type="InterPro" id="IPR019340">
    <property type="entry name" value="Histone_AcTrfase_su3"/>
</dbReference>
<dbReference type="PANTHER" id="PTHR13556:SF2">
    <property type="entry name" value="TRANSCRIPTIONAL ADAPTER 3"/>
    <property type="match status" value="1"/>
</dbReference>
<dbReference type="PANTHER" id="PTHR13556">
    <property type="entry name" value="TRANSCRIPTIONAL ADAPTER 3-RELATED"/>
    <property type="match status" value="1"/>
</dbReference>
<dbReference type="Pfam" id="PF10198">
    <property type="entry name" value="Ada3"/>
    <property type="match status" value="1"/>
</dbReference>
<evidence type="ECO:0000250" key="1"/>
<evidence type="ECO:0000255" key="2"/>
<evidence type="ECO:0000256" key="3">
    <source>
        <dbReference type="SAM" id="MobiDB-lite"/>
    </source>
</evidence>
<evidence type="ECO:0000305" key="4"/>
<name>TAD3B_XENLA</name>
<sequence>MSELKDCPLQFHDFKSVDHVKLCPRYTAVLSRSEDDGIGIEELDTLQLELETLLSSASRRLRVLEAETQILTDWQDKKGDRRFLKLGKEHELGTPIKHSKPKKQKLDGKGSHASGPGPGRPKSRIMQQKMQEYEFTDDPVDVPRIPKNDAPNRFWASVEPYCADITNDEIKVLEDLLKTPEDEADYYKIPPLGKHYSQRWAQEDLLEEQKDGARAALSGDKKKGILGPLAELDSKDVDSLLKKSESQHDQPEDGCPFGHLTQRLLQALVEENIISPVEDSPIPEISGKESGTDGASTSPRSQNKPFSAPHTKSLEVRIKEELISQGLLESDDRPADDSEDEVLAELRKRQAELKALSAHNRAKKQELLRLAKEEMNRQELRQRVRMADNEVMDAFRKIMAARQKKRTPTKKEKDQAWKALKERESILKLLDG</sequence>
<comment type="function">
    <text evidence="1">Functions as a component of the PCAF complex. The PCAF complex is capable of efficiently acetylating histones in a nucleosomal context (By similarity).</text>
</comment>
<comment type="subcellular location">
    <subcellularLocation>
        <location evidence="1">Nucleus</location>
    </subcellularLocation>
</comment>
<comment type="similarity">
    <text evidence="4">Belongs to the NGG1 family.</text>
</comment>
<organism>
    <name type="scientific">Xenopus laevis</name>
    <name type="common">African clawed frog</name>
    <dbReference type="NCBI Taxonomy" id="8355"/>
    <lineage>
        <taxon>Eukaryota</taxon>
        <taxon>Metazoa</taxon>
        <taxon>Chordata</taxon>
        <taxon>Craniata</taxon>
        <taxon>Vertebrata</taxon>
        <taxon>Euteleostomi</taxon>
        <taxon>Amphibia</taxon>
        <taxon>Batrachia</taxon>
        <taxon>Anura</taxon>
        <taxon>Pipoidea</taxon>
        <taxon>Pipidae</taxon>
        <taxon>Xenopodinae</taxon>
        <taxon>Xenopus</taxon>
        <taxon>Xenopus</taxon>
    </lineage>
</organism>